<dbReference type="EC" id="2.1.1.182" evidence="1"/>
<dbReference type="EMBL" id="AM295007">
    <property type="protein sequence ID" value="CAM29544.1"/>
    <property type="molecule type" value="Genomic_DNA"/>
</dbReference>
<dbReference type="RefSeq" id="WP_011888588.1">
    <property type="nucleotide sequence ID" value="NC_009332.1"/>
</dbReference>
<dbReference type="SMR" id="A2RCH2"/>
<dbReference type="KEGG" id="spf:SpyM50201"/>
<dbReference type="HOGENOM" id="CLU_041220_0_0_9"/>
<dbReference type="GO" id="GO:0005829">
    <property type="term" value="C:cytosol"/>
    <property type="evidence" value="ECO:0007669"/>
    <property type="project" value="TreeGrafter"/>
</dbReference>
<dbReference type="GO" id="GO:0052908">
    <property type="term" value="F:16S rRNA (adenine(1518)-N(6)/adenine(1519)-N(6))-dimethyltransferase activity"/>
    <property type="evidence" value="ECO:0007669"/>
    <property type="project" value="UniProtKB-EC"/>
</dbReference>
<dbReference type="GO" id="GO:0003723">
    <property type="term" value="F:RNA binding"/>
    <property type="evidence" value="ECO:0007669"/>
    <property type="project" value="UniProtKB-KW"/>
</dbReference>
<dbReference type="CDD" id="cd02440">
    <property type="entry name" value="AdoMet_MTases"/>
    <property type="match status" value="1"/>
</dbReference>
<dbReference type="FunFam" id="3.40.50.150:FF:000023">
    <property type="entry name" value="Ribosomal RNA small subunit methyltransferase A"/>
    <property type="match status" value="1"/>
</dbReference>
<dbReference type="Gene3D" id="1.10.8.100">
    <property type="entry name" value="Ribosomal RNA adenine dimethylase-like, domain 2"/>
    <property type="match status" value="1"/>
</dbReference>
<dbReference type="Gene3D" id="3.40.50.150">
    <property type="entry name" value="Vaccinia Virus protein VP39"/>
    <property type="match status" value="1"/>
</dbReference>
<dbReference type="HAMAP" id="MF_00607">
    <property type="entry name" value="16SrRNA_methyltr_A"/>
    <property type="match status" value="1"/>
</dbReference>
<dbReference type="InterPro" id="IPR001737">
    <property type="entry name" value="KsgA/Erm"/>
</dbReference>
<dbReference type="InterPro" id="IPR023165">
    <property type="entry name" value="rRNA_Ade_diMease-like_C"/>
</dbReference>
<dbReference type="InterPro" id="IPR020596">
    <property type="entry name" value="rRNA_Ade_Mease_Trfase_CS"/>
</dbReference>
<dbReference type="InterPro" id="IPR020598">
    <property type="entry name" value="rRNA_Ade_methylase_Trfase_N"/>
</dbReference>
<dbReference type="InterPro" id="IPR011530">
    <property type="entry name" value="rRNA_adenine_dimethylase"/>
</dbReference>
<dbReference type="InterPro" id="IPR029063">
    <property type="entry name" value="SAM-dependent_MTases_sf"/>
</dbReference>
<dbReference type="NCBIfam" id="TIGR00755">
    <property type="entry name" value="ksgA"/>
    <property type="match status" value="1"/>
</dbReference>
<dbReference type="PANTHER" id="PTHR11727">
    <property type="entry name" value="DIMETHYLADENOSINE TRANSFERASE"/>
    <property type="match status" value="1"/>
</dbReference>
<dbReference type="PANTHER" id="PTHR11727:SF7">
    <property type="entry name" value="DIMETHYLADENOSINE TRANSFERASE-RELATED"/>
    <property type="match status" value="1"/>
</dbReference>
<dbReference type="Pfam" id="PF00398">
    <property type="entry name" value="RrnaAD"/>
    <property type="match status" value="1"/>
</dbReference>
<dbReference type="SMART" id="SM00650">
    <property type="entry name" value="rADc"/>
    <property type="match status" value="1"/>
</dbReference>
<dbReference type="SUPFAM" id="SSF53335">
    <property type="entry name" value="S-adenosyl-L-methionine-dependent methyltransferases"/>
    <property type="match status" value="1"/>
</dbReference>
<dbReference type="PROSITE" id="PS01131">
    <property type="entry name" value="RRNA_A_DIMETH"/>
    <property type="match status" value="1"/>
</dbReference>
<dbReference type="PROSITE" id="PS51689">
    <property type="entry name" value="SAM_RNA_A_N6_MT"/>
    <property type="match status" value="1"/>
</dbReference>
<name>RSMA_STRPG</name>
<accession>A2RCH2</accession>
<reference key="1">
    <citation type="journal article" date="2007" name="J. Bacteriol.">
        <title>Complete genome of acute rheumatic fever-associated serotype M5 Streptococcus pyogenes strain Manfredo.</title>
        <authorList>
            <person name="Holden M.T.G."/>
            <person name="Scott A."/>
            <person name="Cherevach I."/>
            <person name="Chillingworth T."/>
            <person name="Churcher C."/>
            <person name="Cronin A."/>
            <person name="Dowd L."/>
            <person name="Feltwell T."/>
            <person name="Hamlin N."/>
            <person name="Holroyd S."/>
            <person name="Jagels K."/>
            <person name="Moule S."/>
            <person name="Mungall K."/>
            <person name="Quail M.A."/>
            <person name="Price C."/>
            <person name="Rabbinowitsch E."/>
            <person name="Sharp S."/>
            <person name="Skelton J."/>
            <person name="Whitehead S."/>
            <person name="Barrell B.G."/>
            <person name="Kehoe M."/>
            <person name="Parkhill J."/>
        </authorList>
    </citation>
    <scope>NUCLEOTIDE SEQUENCE [LARGE SCALE GENOMIC DNA]</scope>
    <source>
        <strain>Manfredo</strain>
    </source>
</reference>
<evidence type="ECO:0000255" key="1">
    <source>
        <dbReference type="HAMAP-Rule" id="MF_00607"/>
    </source>
</evidence>
<sequence>MRIADYSVTKAVLDRHGFTFKKSFGQNFLTDTNILQKIVDTAEIDQNVNVIEIGPGIGALTEFLAENAAEVMAFEIDDRLVPILADTLRDFDNVQVVNQDILKADLQTQIKQFKNPDLPIKVVANLPYYITTPILMHLIESKIPFQEFVVMMQREVADRISAEPNTKAYGSLSIAVQYYMTAKVAFIVPRTVFVPAPNVDSAILKMVRRDQPLIEIKDEDFFFRVSRLSFVHRRKTLWNNLTSHFGKSEDIKTKLEKGLALADIKPSIRGEALSIQDFGKLADALKEVGL</sequence>
<organism>
    <name type="scientific">Streptococcus pyogenes serotype M5 (strain Manfredo)</name>
    <dbReference type="NCBI Taxonomy" id="160491"/>
    <lineage>
        <taxon>Bacteria</taxon>
        <taxon>Bacillati</taxon>
        <taxon>Bacillota</taxon>
        <taxon>Bacilli</taxon>
        <taxon>Lactobacillales</taxon>
        <taxon>Streptococcaceae</taxon>
        <taxon>Streptococcus</taxon>
    </lineage>
</organism>
<protein>
    <recommendedName>
        <fullName evidence="1">Ribosomal RNA small subunit methyltransferase A</fullName>
        <ecNumber evidence="1">2.1.1.182</ecNumber>
    </recommendedName>
    <alternativeName>
        <fullName evidence="1">16S rRNA (adenine(1518)-N(6)/adenine(1519)-N(6))-dimethyltransferase</fullName>
    </alternativeName>
    <alternativeName>
        <fullName evidence="1">16S rRNA dimethyladenosine transferase</fullName>
    </alternativeName>
    <alternativeName>
        <fullName evidence="1">16S rRNA dimethylase</fullName>
    </alternativeName>
    <alternativeName>
        <fullName evidence="1">S-adenosylmethionine-6-N', N'-adenosyl(rRNA) dimethyltransferase</fullName>
    </alternativeName>
</protein>
<keyword id="KW-0963">Cytoplasm</keyword>
<keyword id="KW-0489">Methyltransferase</keyword>
<keyword id="KW-0694">RNA-binding</keyword>
<keyword id="KW-0698">rRNA processing</keyword>
<keyword id="KW-0949">S-adenosyl-L-methionine</keyword>
<keyword id="KW-0808">Transferase</keyword>
<gene>
    <name evidence="1" type="primary">rsmA</name>
    <name evidence="1" type="synonym">ksgA</name>
    <name type="ordered locus">SpyM50201</name>
</gene>
<feature type="chain" id="PRO_1000056680" description="Ribosomal RNA small subunit methyltransferase A">
    <location>
        <begin position="1"/>
        <end position="290"/>
    </location>
</feature>
<feature type="binding site" evidence="1">
    <location>
        <position position="27"/>
    </location>
    <ligand>
        <name>S-adenosyl-L-methionine</name>
        <dbReference type="ChEBI" id="CHEBI:59789"/>
    </ligand>
</feature>
<feature type="binding site" evidence="1">
    <location>
        <position position="29"/>
    </location>
    <ligand>
        <name>S-adenosyl-L-methionine</name>
        <dbReference type="ChEBI" id="CHEBI:59789"/>
    </ligand>
</feature>
<feature type="binding site" evidence="1">
    <location>
        <position position="54"/>
    </location>
    <ligand>
        <name>S-adenosyl-L-methionine</name>
        <dbReference type="ChEBI" id="CHEBI:59789"/>
    </ligand>
</feature>
<feature type="binding site" evidence="1">
    <location>
        <position position="75"/>
    </location>
    <ligand>
        <name>S-adenosyl-L-methionine</name>
        <dbReference type="ChEBI" id="CHEBI:59789"/>
    </ligand>
</feature>
<feature type="binding site" evidence="1">
    <location>
        <position position="100"/>
    </location>
    <ligand>
        <name>S-adenosyl-L-methionine</name>
        <dbReference type="ChEBI" id="CHEBI:59789"/>
    </ligand>
</feature>
<feature type="binding site" evidence="1">
    <location>
        <position position="125"/>
    </location>
    <ligand>
        <name>S-adenosyl-L-methionine</name>
        <dbReference type="ChEBI" id="CHEBI:59789"/>
    </ligand>
</feature>
<comment type="function">
    <text evidence="1">Specifically dimethylates two adjacent adenosines (A1518 and A1519) in the loop of a conserved hairpin near the 3'-end of 16S rRNA in the 30S particle. May play a critical role in biogenesis of 30S subunits.</text>
</comment>
<comment type="catalytic activity">
    <reaction evidence="1">
        <text>adenosine(1518)/adenosine(1519) in 16S rRNA + 4 S-adenosyl-L-methionine = N(6)-dimethyladenosine(1518)/N(6)-dimethyladenosine(1519) in 16S rRNA + 4 S-adenosyl-L-homocysteine + 4 H(+)</text>
        <dbReference type="Rhea" id="RHEA:19609"/>
        <dbReference type="Rhea" id="RHEA-COMP:10232"/>
        <dbReference type="Rhea" id="RHEA-COMP:10233"/>
        <dbReference type="ChEBI" id="CHEBI:15378"/>
        <dbReference type="ChEBI" id="CHEBI:57856"/>
        <dbReference type="ChEBI" id="CHEBI:59789"/>
        <dbReference type="ChEBI" id="CHEBI:74411"/>
        <dbReference type="ChEBI" id="CHEBI:74493"/>
        <dbReference type="EC" id="2.1.1.182"/>
    </reaction>
</comment>
<comment type="subcellular location">
    <subcellularLocation>
        <location evidence="1">Cytoplasm</location>
    </subcellularLocation>
</comment>
<comment type="similarity">
    <text evidence="1">Belongs to the class I-like SAM-binding methyltransferase superfamily. rRNA adenine N(6)-methyltransferase family. RsmA subfamily.</text>
</comment>
<proteinExistence type="inferred from homology"/>